<protein>
    <recommendedName>
        <fullName>Uncharacterized protein MT0039</fullName>
    </recommendedName>
</protein>
<proteinExistence type="predicted"/>
<sequence length="131" mass="13968">MTDDADLDLVRRTFAAFARGDLAELTQCFAPDVEQFVPGKHALAGVFRGVDNVVACLGDTAAAADGTMTVTLEDVLSNTDGQVIAVYRLRASRAGKVLDQREAILVTVAGGRITRLSEFYADPAATESFWA</sequence>
<keyword id="KW-1185">Reference proteome</keyword>
<feature type="chain" id="PRO_0000427344" description="Uncharacterized protein MT0039">
    <location>
        <begin position="1"/>
        <end position="131"/>
    </location>
</feature>
<accession>P9WM92</accession>
<accession>L0T5H6</accession>
<accession>P64673</accession>
<accession>P71604</accession>
<reference key="1">
    <citation type="journal article" date="2002" name="J. Bacteriol.">
        <title>Whole-genome comparison of Mycobacterium tuberculosis clinical and laboratory strains.</title>
        <authorList>
            <person name="Fleischmann R.D."/>
            <person name="Alland D."/>
            <person name="Eisen J.A."/>
            <person name="Carpenter L."/>
            <person name="White O."/>
            <person name="Peterson J.D."/>
            <person name="DeBoy R.T."/>
            <person name="Dodson R.J."/>
            <person name="Gwinn M.L."/>
            <person name="Haft D.H."/>
            <person name="Hickey E.K."/>
            <person name="Kolonay J.F."/>
            <person name="Nelson W.C."/>
            <person name="Umayam L.A."/>
            <person name="Ermolaeva M.D."/>
            <person name="Salzberg S.L."/>
            <person name="Delcher A."/>
            <person name="Utterback T.R."/>
            <person name="Weidman J.F."/>
            <person name="Khouri H.M."/>
            <person name="Gill J."/>
            <person name="Mikula A."/>
            <person name="Bishai W."/>
            <person name="Jacobs W.R. Jr."/>
            <person name="Venter J.C."/>
            <person name="Fraser C.M."/>
        </authorList>
    </citation>
    <scope>NUCLEOTIDE SEQUENCE [LARGE SCALE GENOMIC DNA]</scope>
    <source>
        <strain>CDC 1551 / Oshkosh</strain>
    </source>
</reference>
<organism>
    <name type="scientific">Mycobacterium tuberculosis (strain CDC 1551 / Oshkosh)</name>
    <dbReference type="NCBI Taxonomy" id="83331"/>
    <lineage>
        <taxon>Bacteria</taxon>
        <taxon>Bacillati</taxon>
        <taxon>Actinomycetota</taxon>
        <taxon>Actinomycetes</taxon>
        <taxon>Mycobacteriales</taxon>
        <taxon>Mycobacteriaceae</taxon>
        <taxon>Mycobacterium</taxon>
        <taxon>Mycobacterium tuberculosis complex</taxon>
    </lineage>
</organism>
<gene>
    <name type="ordered locus">MT0039</name>
</gene>
<name>Y034_MYCTO</name>
<dbReference type="EMBL" id="AE000516">
    <property type="protein sequence ID" value="AAK44262.1"/>
    <property type="molecule type" value="Genomic_DNA"/>
</dbReference>
<dbReference type="PIR" id="H70701">
    <property type="entry name" value="H70701"/>
</dbReference>
<dbReference type="RefSeq" id="WP_003400421.1">
    <property type="nucleotide sequence ID" value="NZ_KK341227.1"/>
</dbReference>
<dbReference type="SMR" id="P9WM92"/>
<dbReference type="KEGG" id="mtc:MT0039"/>
<dbReference type="PATRIC" id="fig|83331.31.peg.39"/>
<dbReference type="HOGENOM" id="CLU_123830_1_0_11"/>
<dbReference type="Proteomes" id="UP000001020">
    <property type="component" value="Chromosome"/>
</dbReference>
<dbReference type="Gene3D" id="3.10.450.50">
    <property type="match status" value="1"/>
</dbReference>
<dbReference type="InterPro" id="IPR032710">
    <property type="entry name" value="NTF2-like_dom_sf"/>
</dbReference>
<dbReference type="InterPro" id="IPR037401">
    <property type="entry name" value="SnoaL-like"/>
</dbReference>
<dbReference type="Pfam" id="PF12680">
    <property type="entry name" value="SnoaL_2"/>
    <property type="match status" value="1"/>
</dbReference>
<dbReference type="SUPFAM" id="SSF54427">
    <property type="entry name" value="NTF2-like"/>
    <property type="match status" value="1"/>
</dbReference>